<sequence length="267" mass="30038">MKKILLTNDDGYHAKGIKALEQALEEMAEIYVVAPKHEKSACSQCITITAPLRAEKIKGKEGRHYRIDDGTPSDCVYLAINELFKHVCFDLVISGINLGSNMGEDTIYSGTVAGAIEGTIQGVPSIAISQILSNKNKNTPLSFDLAQKIIQDLVQNIFTNGYPLKGRKLLNVNVPNCSLQEYKGERITPKGYRLYKKEVHKRTDPKNESYFWLGLHPLEWQKRENEDRLSDFDAIASNHVSITPLNLDLTSYDDLKSLESWHEGMLK</sequence>
<proteinExistence type="inferred from homology"/>
<accession>B6JMF1</accession>
<feature type="chain" id="PRO_1000092008" description="5'-nucleotidase SurE">
    <location>
        <begin position="1"/>
        <end position="267"/>
    </location>
</feature>
<feature type="binding site" evidence="1">
    <location>
        <position position="9"/>
    </location>
    <ligand>
        <name>a divalent metal cation</name>
        <dbReference type="ChEBI" id="CHEBI:60240"/>
    </ligand>
</feature>
<feature type="binding site" evidence="1">
    <location>
        <position position="10"/>
    </location>
    <ligand>
        <name>a divalent metal cation</name>
        <dbReference type="ChEBI" id="CHEBI:60240"/>
    </ligand>
</feature>
<feature type="binding site" evidence="1">
    <location>
        <position position="40"/>
    </location>
    <ligand>
        <name>a divalent metal cation</name>
        <dbReference type="ChEBI" id="CHEBI:60240"/>
    </ligand>
</feature>
<feature type="binding site" evidence="1">
    <location>
        <position position="97"/>
    </location>
    <ligand>
        <name>a divalent metal cation</name>
        <dbReference type="ChEBI" id="CHEBI:60240"/>
    </ligand>
</feature>
<organism>
    <name type="scientific">Helicobacter pylori (strain P12)</name>
    <dbReference type="NCBI Taxonomy" id="570508"/>
    <lineage>
        <taxon>Bacteria</taxon>
        <taxon>Pseudomonadati</taxon>
        <taxon>Campylobacterota</taxon>
        <taxon>Epsilonproteobacteria</taxon>
        <taxon>Campylobacterales</taxon>
        <taxon>Helicobacteraceae</taxon>
        <taxon>Helicobacter</taxon>
    </lineage>
</organism>
<evidence type="ECO:0000255" key="1">
    <source>
        <dbReference type="HAMAP-Rule" id="MF_00060"/>
    </source>
</evidence>
<gene>
    <name evidence="1" type="primary">surE</name>
    <name type="ordered locus">HPP12_0927</name>
</gene>
<dbReference type="EC" id="3.1.3.5" evidence="1"/>
<dbReference type="EMBL" id="CP001217">
    <property type="protein sequence ID" value="ACJ08079.1"/>
    <property type="molecule type" value="Genomic_DNA"/>
</dbReference>
<dbReference type="SMR" id="B6JMF1"/>
<dbReference type="KEGG" id="hpp:HPP12_0927"/>
<dbReference type="HOGENOM" id="CLU_045192_1_3_7"/>
<dbReference type="Proteomes" id="UP000008198">
    <property type="component" value="Chromosome"/>
</dbReference>
<dbReference type="GO" id="GO:0005737">
    <property type="term" value="C:cytoplasm"/>
    <property type="evidence" value="ECO:0007669"/>
    <property type="project" value="UniProtKB-SubCell"/>
</dbReference>
<dbReference type="GO" id="GO:0008254">
    <property type="term" value="F:3'-nucleotidase activity"/>
    <property type="evidence" value="ECO:0007669"/>
    <property type="project" value="TreeGrafter"/>
</dbReference>
<dbReference type="GO" id="GO:0008253">
    <property type="term" value="F:5'-nucleotidase activity"/>
    <property type="evidence" value="ECO:0007669"/>
    <property type="project" value="UniProtKB-UniRule"/>
</dbReference>
<dbReference type="GO" id="GO:0004309">
    <property type="term" value="F:exopolyphosphatase activity"/>
    <property type="evidence" value="ECO:0007669"/>
    <property type="project" value="TreeGrafter"/>
</dbReference>
<dbReference type="GO" id="GO:0046872">
    <property type="term" value="F:metal ion binding"/>
    <property type="evidence" value="ECO:0007669"/>
    <property type="project" value="UniProtKB-UniRule"/>
</dbReference>
<dbReference type="GO" id="GO:0000166">
    <property type="term" value="F:nucleotide binding"/>
    <property type="evidence" value="ECO:0007669"/>
    <property type="project" value="UniProtKB-KW"/>
</dbReference>
<dbReference type="FunFam" id="3.40.1210.10:FF:000001">
    <property type="entry name" value="5'/3'-nucleotidase SurE"/>
    <property type="match status" value="1"/>
</dbReference>
<dbReference type="Gene3D" id="3.40.1210.10">
    <property type="entry name" value="Survival protein SurE-like phosphatase/nucleotidase"/>
    <property type="match status" value="1"/>
</dbReference>
<dbReference type="HAMAP" id="MF_00060">
    <property type="entry name" value="SurE"/>
    <property type="match status" value="1"/>
</dbReference>
<dbReference type="InterPro" id="IPR030048">
    <property type="entry name" value="SurE"/>
</dbReference>
<dbReference type="InterPro" id="IPR002828">
    <property type="entry name" value="SurE-like_Pase/nucleotidase"/>
</dbReference>
<dbReference type="InterPro" id="IPR036523">
    <property type="entry name" value="SurE-like_sf"/>
</dbReference>
<dbReference type="NCBIfam" id="NF001490">
    <property type="entry name" value="PRK00346.1-4"/>
    <property type="match status" value="1"/>
</dbReference>
<dbReference type="NCBIfam" id="NF001494">
    <property type="entry name" value="PRK00346.2-4"/>
    <property type="match status" value="1"/>
</dbReference>
<dbReference type="NCBIfam" id="TIGR00087">
    <property type="entry name" value="surE"/>
    <property type="match status" value="1"/>
</dbReference>
<dbReference type="PANTHER" id="PTHR30457">
    <property type="entry name" value="5'-NUCLEOTIDASE SURE"/>
    <property type="match status" value="1"/>
</dbReference>
<dbReference type="PANTHER" id="PTHR30457:SF12">
    <property type="entry name" value="5'_3'-NUCLEOTIDASE SURE"/>
    <property type="match status" value="1"/>
</dbReference>
<dbReference type="Pfam" id="PF01975">
    <property type="entry name" value="SurE"/>
    <property type="match status" value="1"/>
</dbReference>
<dbReference type="SUPFAM" id="SSF64167">
    <property type="entry name" value="SurE-like"/>
    <property type="match status" value="1"/>
</dbReference>
<name>SURE_HELP2</name>
<comment type="function">
    <text evidence="1">Nucleotidase that shows phosphatase activity on nucleoside 5'-monophosphates.</text>
</comment>
<comment type="catalytic activity">
    <reaction evidence="1">
        <text>a ribonucleoside 5'-phosphate + H2O = a ribonucleoside + phosphate</text>
        <dbReference type="Rhea" id="RHEA:12484"/>
        <dbReference type="ChEBI" id="CHEBI:15377"/>
        <dbReference type="ChEBI" id="CHEBI:18254"/>
        <dbReference type="ChEBI" id="CHEBI:43474"/>
        <dbReference type="ChEBI" id="CHEBI:58043"/>
        <dbReference type="EC" id="3.1.3.5"/>
    </reaction>
</comment>
<comment type="cofactor">
    <cofactor evidence="1">
        <name>a divalent metal cation</name>
        <dbReference type="ChEBI" id="CHEBI:60240"/>
    </cofactor>
    <text evidence="1">Binds 1 divalent metal cation per subunit.</text>
</comment>
<comment type="subcellular location">
    <subcellularLocation>
        <location evidence="1">Cytoplasm</location>
    </subcellularLocation>
</comment>
<comment type="similarity">
    <text evidence="1">Belongs to the SurE nucleotidase family.</text>
</comment>
<protein>
    <recommendedName>
        <fullName evidence="1">5'-nucleotidase SurE</fullName>
        <ecNumber evidence="1">3.1.3.5</ecNumber>
    </recommendedName>
    <alternativeName>
        <fullName evidence="1">Nucleoside 5'-monophosphate phosphohydrolase</fullName>
    </alternativeName>
</protein>
<reference key="1">
    <citation type="submission" date="2008-10" db="EMBL/GenBank/DDBJ databases">
        <title>The complete genome sequence of Helicobacter pylori strain P12.</title>
        <authorList>
            <person name="Fischer W."/>
            <person name="Windhager L."/>
            <person name="Karnholz A."/>
            <person name="Zeiller M."/>
            <person name="Zimmer R."/>
            <person name="Haas R."/>
        </authorList>
    </citation>
    <scope>NUCLEOTIDE SEQUENCE [LARGE SCALE GENOMIC DNA]</scope>
    <source>
        <strain>P12</strain>
    </source>
</reference>
<keyword id="KW-0963">Cytoplasm</keyword>
<keyword id="KW-0378">Hydrolase</keyword>
<keyword id="KW-0479">Metal-binding</keyword>
<keyword id="KW-0547">Nucleotide-binding</keyword>